<name>Y550_RICCN</name>
<proteinExistence type="predicted"/>
<protein>
    <recommendedName>
        <fullName>Uncharacterized protein RC0550</fullName>
    </recommendedName>
</protein>
<reference key="1">
    <citation type="journal article" date="2001" name="Science">
        <title>Mechanisms of evolution in Rickettsia conorii and R. prowazekii.</title>
        <authorList>
            <person name="Ogata H."/>
            <person name="Audic S."/>
            <person name="Renesto-Audiffren P."/>
            <person name="Fournier P.-E."/>
            <person name="Barbe V."/>
            <person name="Samson D."/>
            <person name="Roux V."/>
            <person name="Cossart P."/>
            <person name="Weissenbach J."/>
            <person name="Claverie J.-M."/>
            <person name="Raoult D."/>
        </authorList>
    </citation>
    <scope>NUCLEOTIDE SEQUENCE [LARGE SCALE GENOMIC DNA]</scope>
    <source>
        <strain>ATCC VR-613 / Malish 7</strain>
    </source>
</reference>
<gene>
    <name type="ordered locus">RC0550</name>
</gene>
<sequence>MTADYSFLKSFAEYIIDKLGKDTKVQIILPNNFSCLELKKILTDKYKIKLPIIIPFNSLISKKIDSDYISKIEELLILSSIITEYKELPLNKNESLKAAELLRKLFNDLIINNIDIKLIEVYNNSNYWQKIYKFLEYCFLRWQEEISFTQKQTKAVYKLKLLQEEIIKIKTGHKQVILAGIFKPNVFFKRFEEELKDYIIHYNPASKQISDGISYYEPNDIYEETKQISYICSRNKDRRIAIVTNNNKLKRVYCNFLDKYEDLLGNDLRLTNIGELLTSIIKILCNNFDLKLLFLLLKNPLINCPTVQQLELMLSNKNRFISSPKYLLQLQFDNEDIREYCRNLIDILFTDTPHNIQAILTLTKEITEKLLPTIWEKEGGAELLEFLTNLTAYSKYINSTDKKDFPKIFSFLLSNIKYYKNTDAASIIIGRPEDLALCEFDLIILPHFNNENWTLSAKAHPWLSKQALQILNIDYDEIAPTLYSDYFNLFLQNKQIVILNAKKYDGKLSVPSNLFLKLEKGSVSPRDLITGSSNYMDTVVKPRYDKSIEIHSPSFPTTLSVTEIETLIKNPYGFYAKKILGLRKKDHIWEEPKISDFGNLIHKVLEEYSKNYDKQYINLNLLDKQNALINIGNHILYSTILPSYTKKTWQIKLTAFSKAFILFDIERRKNCKEIYFETKGELRLNIVGQDIKIIGIADRIEISKSNNITILDYKTGTIPTKKEIELGLSPQLIIESLMLLENGFTKCNSLSLLCHPQPLLCYSRESRNPVINNNITIAYVKITSTEPYVHTTEITLSIETLNRHKAGLVKLLEHYITNQFFSYDLNLSKYNDYLHLSR</sequence>
<feature type="chain" id="PRO_0000280805" description="Uncharacterized protein RC0550">
    <location>
        <begin position="1"/>
        <end position="838"/>
    </location>
</feature>
<organism>
    <name type="scientific">Rickettsia conorii (strain ATCC VR-613 / Malish 7)</name>
    <dbReference type="NCBI Taxonomy" id="272944"/>
    <lineage>
        <taxon>Bacteria</taxon>
        <taxon>Pseudomonadati</taxon>
        <taxon>Pseudomonadota</taxon>
        <taxon>Alphaproteobacteria</taxon>
        <taxon>Rickettsiales</taxon>
        <taxon>Rickettsiaceae</taxon>
        <taxon>Rickettsieae</taxon>
        <taxon>Rickettsia</taxon>
        <taxon>spotted fever group</taxon>
    </lineage>
</organism>
<dbReference type="EMBL" id="AE006914">
    <property type="protein sequence ID" value="AAL03088.1"/>
    <property type="molecule type" value="Genomic_DNA"/>
</dbReference>
<dbReference type="PIR" id="F97768">
    <property type="entry name" value="F97768"/>
</dbReference>
<dbReference type="RefSeq" id="WP_010977186.1">
    <property type="nucleotide sequence ID" value="NC_003103.1"/>
</dbReference>
<dbReference type="SMR" id="Q92I70"/>
<dbReference type="GeneID" id="928760"/>
<dbReference type="KEGG" id="rco:RC0550"/>
<dbReference type="PATRIC" id="fig|272944.4.peg.629"/>
<dbReference type="HOGENOM" id="CLU_337988_0_0_5"/>
<dbReference type="Proteomes" id="UP000000816">
    <property type="component" value="Chromosome"/>
</dbReference>
<dbReference type="Gene3D" id="3.90.320.10">
    <property type="match status" value="1"/>
</dbReference>
<dbReference type="InterPro" id="IPR027417">
    <property type="entry name" value="P-loop_NTPase"/>
</dbReference>
<dbReference type="InterPro" id="IPR011604">
    <property type="entry name" value="PDDEXK-like_dom_sf"/>
</dbReference>
<dbReference type="InterPro" id="IPR038726">
    <property type="entry name" value="PDDEXK_AddAB-type"/>
</dbReference>
<dbReference type="InterPro" id="IPR011335">
    <property type="entry name" value="Restrct_endonuc-II-like"/>
</dbReference>
<dbReference type="InterPro" id="IPR022439">
    <property type="entry name" value="RPE4"/>
</dbReference>
<dbReference type="NCBIfam" id="TIGR03777">
    <property type="entry name" value="RPE4"/>
    <property type="match status" value="1"/>
</dbReference>
<dbReference type="Pfam" id="PF12705">
    <property type="entry name" value="PDDEXK_1"/>
    <property type="match status" value="1"/>
</dbReference>
<dbReference type="SUPFAM" id="SSF52540">
    <property type="entry name" value="P-loop containing nucleoside triphosphate hydrolases"/>
    <property type="match status" value="1"/>
</dbReference>
<dbReference type="SUPFAM" id="SSF52980">
    <property type="entry name" value="Restriction endonuclease-like"/>
    <property type="match status" value="1"/>
</dbReference>
<accession>Q92I70</accession>